<reference key="1">
    <citation type="journal article" date="2001" name="Plant Physiol.">
        <title>Expression of a gibberellin 2-oxidase gene around the shoot apex is related to phase transition in rice.</title>
        <authorList>
            <person name="Sakamoto T."/>
            <person name="Kobayashi M."/>
            <person name="Itoh H."/>
            <person name="Tagiri A."/>
            <person name="Kayano T."/>
            <person name="Tanaka H."/>
            <person name="Iwahori S."/>
            <person name="Matsuoka M."/>
        </authorList>
    </citation>
    <scope>NUCLEOTIDE SEQUENCE [MRNA]</scope>
    <scope>FUNCTION</scope>
    <scope>CATALYTIC ACTIVITY</scope>
    <scope>COFACTOR</scope>
    <scope>TISSUE SPECIFICITY</scope>
    <source>
        <strain>cv. Nipponbare</strain>
    </source>
</reference>
<reference key="2">
    <citation type="journal article" date="2005" name="Mol. Genet. Genomics">
        <title>A fine physical map of the rice chromosome 5.</title>
        <authorList>
            <person name="Cheng C.-H."/>
            <person name="Chung M.C."/>
            <person name="Liu S.-M."/>
            <person name="Chen S.-K."/>
            <person name="Kao F.Y."/>
            <person name="Lin S.-J."/>
            <person name="Hsiao S.-H."/>
            <person name="Tseng I.C."/>
            <person name="Hsing Y.-I.C."/>
            <person name="Wu H.-P."/>
            <person name="Chen C.-S."/>
            <person name="Shaw J.-F."/>
            <person name="Wu J."/>
            <person name="Matsumoto T."/>
            <person name="Sasaki T."/>
            <person name="Chen H.-C."/>
            <person name="Chow T.-Y."/>
        </authorList>
    </citation>
    <scope>NUCLEOTIDE SEQUENCE [LARGE SCALE GENOMIC DNA]</scope>
    <source>
        <strain>cv. Nipponbare</strain>
    </source>
</reference>
<reference key="3">
    <citation type="journal article" date="2005" name="Nature">
        <title>The map-based sequence of the rice genome.</title>
        <authorList>
            <consortium name="International rice genome sequencing project (IRGSP)"/>
        </authorList>
    </citation>
    <scope>NUCLEOTIDE SEQUENCE [LARGE SCALE GENOMIC DNA]</scope>
    <source>
        <strain>cv. Nipponbare</strain>
    </source>
</reference>
<reference key="4">
    <citation type="journal article" date="2008" name="Nucleic Acids Res.">
        <title>The rice annotation project database (RAP-DB): 2008 update.</title>
        <authorList>
            <consortium name="The rice annotation project (RAP)"/>
        </authorList>
    </citation>
    <scope>GENOME REANNOTATION</scope>
    <source>
        <strain>cv. Nipponbare</strain>
    </source>
</reference>
<reference key="5">
    <citation type="journal article" date="2013" name="Rice">
        <title>Improvement of the Oryza sativa Nipponbare reference genome using next generation sequence and optical map data.</title>
        <authorList>
            <person name="Kawahara Y."/>
            <person name="de la Bastide M."/>
            <person name="Hamilton J.P."/>
            <person name="Kanamori H."/>
            <person name="McCombie W.R."/>
            <person name="Ouyang S."/>
            <person name="Schwartz D.C."/>
            <person name="Tanaka T."/>
            <person name="Wu J."/>
            <person name="Zhou S."/>
            <person name="Childs K.L."/>
            <person name="Davidson R.M."/>
            <person name="Lin H."/>
            <person name="Quesada-Ocampo L."/>
            <person name="Vaillancourt B."/>
            <person name="Sakai H."/>
            <person name="Lee S.S."/>
            <person name="Kim J."/>
            <person name="Numa H."/>
            <person name="Itoh T."/>
            <person name="Buell C.R."/>
            <person name="Matsumoto T."/>
        </authorList>
    </citation>
    <scope>GENOME REANNOTATION</scope>
    <source>
        <strain>cv. Nipponbare</strain>
    </source>
</reference>
<gene>
    <name evidence="4" type="primary">GA2OX1</name>
    <name evidence="7" type="ordered locus">Os05g0158600</name>
    <name evidence="5" type="ordered locus">LOC_Os05g06670</name>
    <name evidence="6" type="ORF">OSJNBa0017J22.4</name>
</gene>
<feature type="chain" id="PRO_0000444355" description="Gibberellin 2-beta-dioxygenase 1">
    <location>
        <begin position="1"/>
        <end position="382"/>
    </location>
</feature>
<feature type="domain" description="Fe2OG dioxygenase" evidence="2">
    <location>
        <begin position="189"/>
        <end position="321"/>
    </location>
</feature>
<feature type="binding site" evidence="1">
    <location>
        <position position="199"/>
    </location>
    <ligand>
        <name>2-oxoglutarate</name>
        <dbReference type="ChEBI" id="CHEBI:16810"/>
    </ligand>
</feature>
<feature type="binding site" evidence="2">
    <location>
        <position position="241"/>
    </location>
    <ligand>
        <name>Fe cation</name>
        <dbReference type="ChEBI" id="CHEBI:24875"/>
    </ligand>
</feature>
<feature type="binding site" evidence="2">
    <location>
        <position position="243"/>
    </location>
    <ligand>
        <name>Fe cation</name>
        <dbReference type="ChEBI" id="CHEBI:24875"/>
    </ligand>
</feature>
<feature type="binding site" evidence="2">
    <location>
        <position position="302"/>
    </location>
    <ligand>
        <name>Fe cation</name>
        <dbReference type="ChEBI" id="CHEBI:24875"/>
    </ligand>
</feature>
<feature type="binding site" evidence="2">
    <location>
        <position position="312"/>
    </location>
    <ligand>
        <name>2-oxoglutarate</name>
        <dbReference type="ChEBI" id="CHEBI:16810"/>
    </ligand>
</feature>
<feature type="binding site" evidence="1">
    <location>
        <position position="314"/>
    </location>
    <ligand>
        <name>2-oxoglutarate</name>
        <dbReference type="ChEBI" id="CHEBI:16810"/>
    </ligand>
</feature>
<dbReference type="EC" id="1.14.11.13" evidence="3"/>
<dbReference type="EMBL" id="AB059416">
    <property type="protein sequence ID" value="BAB40934.1"/>
    <property type="molecule type" value="mRNA"/>
</dbReference>
<dbReference type="EMBL" id="AC119288">
    <property type="protein sequence ID" value="AAV43914.1"/>
    <property type="molecule type" value="Genomic_DNA"/>
</dbReference>
<dbReference type="EMBL" id="AP008211">
    <property type="protein sequence ID" value="BAF16625.1"/>
    <property type="molecule type" value="Genomic_DNA"/>
</dbReference>
<dbReference type="EMBL" id="AP014961">
    <property type="protein sequence ID" value="BAS92384.1"/>
    <property type="molecule type" value="Genomic_DNA"/>
</dbReference>
<dbReference type="SMR" id="Q5W726"/>
<dbReference type="FunCoup" id="Q5W726">
    <property type="interactions" value="917"/>
</dbReference>
<dbReference type="STRING" id="39947.Q5W726"/>
<dbReference type="PaxDb" id="39947-Q5W726"/>
<dbReference type="EnsemblPlants" id="Os05t0158600-02">
    <property type="protein sequence ID" value="Os05t0158600-02"/>
    <property type="gene ID" value="Os05g0158600"/>
</dbReference>
<dbReference type="GeneID" id="4337874"/>
<dbReference type="Gramene" id="Os05t0158600-02">
    <property type="protein sequence ID" value="Os05t0158600-02"/>
    <property type="gene ID" value="Os05g0158600"/>
</dbReference>
<dbReference type="KEGG" id="dosa:Os05g0158600"/>
<dbReference type="KEGG" id="osa:4337874"/>
<dbReference type="InParanoid" id="Q5W726"/>
<dbReference type="OrthoDB" id="288590at2759"/>
<dbReference type="Proteomes" id="UP000000763">
    <property type="component" value="Chromosome 5"/>
</dbReference>
<dbReference type="Proteomes" id="UP000059680">
    <property type="component" value="Chromosome 5"/>
</dbReference>
<dbReference type="ExpressionAtlas" id="Q5W726">
    <property type="expression patterns" value="baseline and differential"/>
</dbReference>
<dbReference type="GO" id="GO:0045543">
    <property type="term" value="F:gibberellin 2-beta-dioxygenase activity"/>
    <property type="evidence" value="ECO:0000314"/>
    <property type="project" value="UniProtKB"/>
</dbReference>
<dbReference type="GO" id="GO:0016707">
    <property type="term" value="F:gibberellin 3-beta-dioxygenase activity"/>
    <property type="evidence" value="ECO:0000314"/>
    <property type="project" value="UniProtKB"/>
</dbReference>
<dbReference type="GO" id="GO:0046872">
    <property type="term" value="F:metal ion binding"/>
    <property type="evidence" value="ECO:0007669"/>
    <property type="project" value="UniProtKB-KW"/>
</dbReference>
<dbReference type="GO" id="GO:0045487">
    <property type="term" value="P:gibberellin catabolic process"/>
    <property type="evidence" value="ECO:0000318"/>
    <property type="project" value="GO_Central"/>
</dbReference>
<dbReference type="GO" id="GO:0009685">
    <property type="term" value="P:gibberellin metabolic process"/>
    <property type="evidence" value="ECO:0000315"/>
    <property type="project" value="UniProtKB"/>
</dbReference>
<dbReference type="GO" id="GO:0009416">
    <property type="term" value="P:response to light stimulus"/>
    <property type="evidence" value="ECO:0000318"/>
    <property type="project" value="GO_Central"/>
</dbReference>
<dbReference type="FunFam" id="2.60.120.330:FF:000025">
    <property type="entry name" value="Gibberellin 2-beta-dioxygenase 2"/>
    <property type="match status" value="1"/>
</dbReference>
<dbReference type="Gene3D" id="2.60.120.330">
    <property type="entry name" value="B-lactam Antibiotic, Isopenicillin N Synthase, Chain"/>
    <property type="match status" value="1"/>
</dbReference>
<dbReference type="InterPro" id="IPR026992">
    <property type="entry name" value="DIOX_N"/>
</dbReference>
<dbReference type="InterPro" id="IPR044861">
    <property type="entry name" value="IPNS-like_FE2OG_OXY"/>
</dbReference>
<dbReference type="InterPro" id="IPR027443">
    <property type="entry name" value="IPNS-like_sf"/>
</dbReference>
<dbReference type="InterPro" id="IPR050231">
    <property type="entry name" value="Iron_ascorbate_oxido_reductase"/>
</dbReference>
<dbReference type="InterPro" id="IPR005123">
    <property type="entry name" value="Oxoglu/Fe-dep_dioxygenase_dom"/>
</dbReference>
<dbReference type="PANTHER" id="PTHR47990">
    <property type="entry name" value="2-OXOGLUTARATE (2OG) AND FE(II)-DEPENDENT OXYGENASE SUPERFAMILY PROTEIN-RELATED"/>
    <property type="match status" value="1"/>
</dbReference>
<dbReference type="Pfam" id="PF03171">
    <property type="entry name" value="2OG-FeII_Oxy"/>
    <property type="match status" value="1"/>
</dbReference>
<dbReference type="Pfam" id="PF14226">
    <property type="entry name" value="DIOX_N"/>
    <property type="match status" value="1"/>
</dbReference>
<dbReference type="SUPFAM" id="SSF51197">
    <property type="entry name" value="Clavaminate synthase-like"/>
    <property type="match status" value="1"/>
</dbReference>
<dbReference type="PROSITE" id="PS51471">
    <property type="entry name" value="FE2OG_OXY"/>
    <property type="match status" value="1"/>
</dbReference>
<proteinExistence type="evidence at protein level"/>
<name>G2OX1_ORYSJ</name>
<evidence type="ECO:0000250" key="1">
    <source>
        <dbReference type="UniProtKB" id="D4N500"/>
    </source>
</evidence>
<evidence type="ECO:0000255" key="2">
    <source>
        <dbReference type="PROSITE-ProRule" id="PRU00805"/>
    </source>
</evidence>
<evidence type="ECO:0000269" key="3">
    <source>
    </source>
</evidence>
<evidence type="ECO:0000303" key="4">
    <source>
    </source>
</evidence>
<evidence type="ECO:0000305" key="5"/>
<evidence type="ECO:0000312" key="6">
    <source>
        <dbReference type="EMBL" id="AAV43914.1"/>
    </source>
</evidence>
<evidence type="ECO:0000312" key="7">
    <source>
        <dbReference type="EMBL" id="BAF16625.1"/>
    </source>
</evidence>
<accession>Q5W726</accession>
<accession>Q9AVA5</accession>
<protein>
    <recommendedName>
        <fullName evidence="5">Gibberellin 2-beta-dioxygenase 1</fullName>
        <ecNumber evidence="3">1.14.11.13</ecNumber>
    </recommendedName>
    <alternativeName>
        <fullName evidence="5">Gibberellin 2-beta-hydroxylase 1</fullName>
    </alternativeName>
    <alternativeName>
        <fullName evidence="4">Gibberellin 2-oxidase 1</fullName>
        <shortName evidence="4">GA 2-oxidase 1</shortName>
        <shortName evidence="4">OsGA2ox1</shortName>
    </alternativeName>
</protein>
<organism>
    <name type="scientific">Oryza sativa subsp. japonica</name>
    <name type="common">Rice</name>
    <dbReference type="NCBI Taxonomy" id="39947"/>
    <lineage>
        <taxon>Eukaryota</taxon>
        <taxon>Viridiplantae</taxon>
        <taxon>Streptophyta</taxon>
        <taxon>Embryophyta</taxon>
        <taxon>Tracheophyta</taxon>
        <taxon>Spermatophyta</taxon>
        <taxon>Magnoliopsida</taxon>
        <taxon>Liliopsida</taxon>
        <taxon>Poales</taxon>
        <taxon>Poaceae</taxon>
        <taxon>BOP clade</taxon>
        <taxon>Oryzoideae</taxon>
        <taxon>Oryzeae</taxon>
        <taxon>Oryzinae</taxon>
        <taxon>Oryza</taxon>
        <taxon>Oryza sativa</taxon>
    </lineage>
</organism>
<comment type="function">
    <text evidence="3">Catalyzes the 2-beta-hydroxylation of several biologically active gibberellins, leading to the homeostatic regulation of their endogenous level. Catabolism of gibberellins (GAs) plays a central role in plant development. Controls the level of bioactive GAs in the shoot apical meristem, which regulates the vegetative to reproductive phase transition. In vitro, converts GA1, GA4, GA9, GA20, and GA44 to the corresponding 2-beta-hydroxylated products GA8, GA34, GA51, GA29, and GA98, respectively.</text>
</comment>
<comment type="catalytic activity">
    <reaction evidence="3">
        <text>gibberellin A1 + 2-oxoglutarate + O2 = gibberellin A8 + succinate + CO2</text>
        <dbReference type="Rhea" id="RHEA:15005"/>
        <dbReference type="ChEBI" id="CHEBI:15379"/>
        <dbReference type="ChEBI" id="CHEBI:16526"/>
        <dbReference type="ChEBI" id="CHEBI:16810"/>
        <dbReference type="ChEBI" id="CHEBI:30031"/>
        <dbReference type="ChEBI" id="CHEBI:58524"/>
        <dbReference type="ChEBI" id="CHEBI:58594"/>
        <dbReference type="EC" id="1.14.11.13"/>
    </reaction>
</comment>
<comment type="cofactor">
    <cofactor evidence="3">
        <name>L-ascorbate</name>
        <dbReference type="ChEBI" id="CHEBI:38290"/>
    </cofactor>
</comment>
<comment type="cofactor">
    <cofactor evidence="2">
        <name>Fe(2+)</name>
        <dbReference type="ChEBI" id="CHEBI:29033"/>
    </cofactor>
    <text evidence="2">Binds 1 Fe(2+) ion per subunit.</text>
</comment>
<comment type="tissue specificity">
    <text evidence="3">Expressed in roots, shoot apex, and in the basal region of leaf primordia and young leaves.</text>
</comment>
<comment type="miscellaneous">
    <text evidence="3">Plants overexpressing GA2OX1 exhibit extremely dwarf phenotype and are unable to achieve phase transition from vegetative to reproductive growth.</text>
</comment>
<comment type="similarity">
    <text evidence="5">Belongs to the iron/ascorbate-dependent oxidoreductase family. GA2OX subfamily.</text>
</comment>
<keyword id="KW-0223">Dioxygenase</keyword>
<keyword id="KW-0408">Iron</keyword>
<keyword id="KW-0479">Metal-binding</keyword>
<keyword id="KW-0560">Oxidoreductase</keyword>
<keyword id="KW-1185">Reference proteome</keyword>
<sequence length="382" mass="40620">MVVPSATTPARQETVVAAAPPAAAASGVVGGGGGVTIATVDMSAERGAVARQVATACAAHGFFRCVGHGVPAAAPVAARLDAATAAFFAMAPAEKQRAGPASPLGYGCRSIGFNGDVGELEYLLLHANPAAVAHRARTIDAMDPSRFSAIVNEYIEAMKKLACEILDLLGEGLGLKDPRYFSKLTTNADSDCLLRINHYPPSCNIHKLDHDDQCNIKSLVSTKASNGGNLMAGGRIGFGEHSDPQILSLLRANDVEGLQVFVPDHEGKEMWVQVPSDPSAIFVNVGDVLQALTNGRLISIRHRVIATACRPRLSTIYFASPPLHARISALPETITASSPRRYRSFTWAEYKTTMYSLRLSHSRLELFKIDDDDSDNASEGKA</sequence>